<proteinExistence type="inferred from homology"/>
<evidence type="ECO:0000250" key="1"/>
<evidence type="ECO:0000305" key="2"/>
<protein>
    <recommendedName>
        <fullName>Arginine--tRNA ligase</fullName>
        <ecNumber>6.1.1.19</ecNumber>
    </recommendedName>
    <alternativeName>
        <fullName>Arginyl-tRNA synthetase</fullName>
        <shortName>ArgRS</shortName>
    </alternativeName>
</protein>
<reference key="1">
    <citation type="journal article" date="1996" name="Science">
        <title>Complete genome sequence of the methanogenic archaeon, Methanococcus jannaschii.</title>
        <authorList>
            <person name="Bult C.J."/>
            <person name="White O."/>
            <person name="Olsen G.J."/>
            <person name="Zhou L."/>
            <person name="Fleischmann R.D."/>
            <person name="Sutton G.G."/>
            <person name="Blake J.A."/>
            <person name="FitzGerald L.M."/>
            <person name="Clayton R.A."/>
            <person name="Gocayne J.D."/>
            <person name="Kerlavage A.R."/>
            <person name="Dougherty B.A."/>
            <person name="Tomb J.-F."/>
            <person name="Adams M.D."/>
            <person name="Reich C.I."/>
            <person name="Overbeek R."/>
            <person name="Kirkness E.F."/>
            <person name="Weinstock K.G."/>
            <person name="Merrick J.M."/>
            <person name="Glodek A."/>
            <person name="Scott J.L."/>
            <person name="Geoghagen N.S.M."/>
            <person name="Weidman J.F."/>
            <person name="Fuhrmann J.L."/>
            <person name="Nguyen D."/>
            <person name="Utterback T.R."/>
            <person name="Kelley J.M."/>
            <person name="Peterson J.D."/>
            <person name="Sadow P.W."/>
            <person name="Hanna M.C."/>
            <person name="Cotton M.D."/>
            <person name="Roberts K.M."/>
            <person name="Hurst M.A."/>
            <person name="Kaine B.P."/>
            <person name="Borodovsky M."/>
            <person name="Klenk H.-P."/>
            <person name="Fraser C.M."/>
            <person name="Smith H.O."/>
            <person name="Woese C.R."/>
            <person name="Venter J.C."/>
        </authorList>
    </citation>
    <scope>NUCLEOTIDE SEQUENCE [LARGE SCALE GENOMIC DNA]</scope>
    <source>
        <strain>ATCC 43067 / DSM 2661 / JAL-1 / JCM 10045 / NBRC 100440</strain>
    </source>
</reference>
<comment type="catalytic activity">
    <reaction>
        <text>tRNA(Arg) + L-arginine + ATP = L-arginyl-tRNA(Arg) + AMP + diphosphate</text>
        <dbReference type="Rhea" id="RHEA:20301"/>
        <dbReference type="Rhea" id="RHEA-COMP:9658"/>
        <dbReference type="Rhea" id="RHEA-COMP:9673"/>
        <dbReference type="ChEBI" id="CHEBI:30616"/>
        <dbReference type="ChEBI" id="CHEBI:32682"/>
        <dbReference type="ChEBI" id="CHEBI:33019"/>
        <dbReference type="ChEBI" id="CHEBI:78442"/>
        <dbReference type="ChEBI" id="CHEBI:78513"/>
        <dbReference type="ChEBI" id="CHEBI:456215"/>
        <dbReference type="EC" id="6.1.1.19"/>
    </reaction>
</comment>
<comment type="subcellular location">
    <subcellularLocation>
        <location evidence="1">Cytoplasm</location>
    </subcellularLocation>
</comment>
<comment type="similarity">
    <text evidence="2">Belongs to the class-I aminoacyl-tRNA synthetase family.</text>
</comment>
<dbReference type="EC" id="6.1.1.19"/>
<dbReference type="EMBL" id="L77117">
    <property type="protein sequence ID" value="AAB98223.1"/>
    <property type="molecule type" value="Genomic_DNA"/>
</dbReference>
<dbReference type="PIR" id="F64329">
    <property type="entry name" value="F64329"/>
</dbReference>
<dbReference type="RefSeq" id="WP_010869735.1">
    <property type="nucleotide sequence ID" value="NC_000909.1"/>
</dbReference>
<dbReference type="SMR" id="Q57689"/>
<dbReference type="FunCoup" id="Q57689">
    <property type="interactions" value="223"/>
</dbReference>
<dbReference type="STRING" id="243232.MJ_0237"/>
<dbReference type="PaxDb" id="243232-MJ_0237"/>
<dbReference type="EnsemblBacteria" id="AAB98223">
    <property type="protein sequence ID" value="AAB98223"/>
    <property type="gene ID" value="MJ_0237"/>
</dbReference>
<dbReference type="GeneID" id="1451091"/>
<dbReference type="KEGG" id="mja:MJ_0237"/>
<dbReference type="eggNOG" id="arCOG00487">
    <property type="taxonomic scope" value="Archaea"/>
</dbReference>
<dbReference type="HOGENOM" id="CLU_006406_6_1_2"/>
<dbReference type="InParanoid" id="Q57689"/>
<dbReference type="OrthoDB" id="372102at2157"/>
<dbReference type="PhylomeDB" id="Q57689"/>
<dbReference type="Proteomes" id="UP000000805">
    <property type="component" value="Chromosome"/>
</dbReference>
<dbReference type="GO" id="GO:0005737">
    <property type="term" value="C:cytoplasm"/>
    <property type="evidence" value="ECO:0007669"/>
    <property type="project" value="UniProtKB-SubCell"/>
</dbReference>
<dbReference type="GO" id="GO:0004814">
    <property type="term" value="F:arginine-tRNA ligase activity"/>
    <property type="evidence" value="ECO:0000318"/>
    <property type="project" value="GO_Central"/>
</dbReference>
<dbReference type="GO" id="GO:0005524">
    <property type="term" value="F:ATP binding"/>
    <property type="evidence" value="ECO:0007669"/>
    <property type="project" value="UniProtKB-UniRule"/>
</dbReference>
<dbReference type="GO" id="GO:0006420">
    <property type="term" value="P:arginyl-tRNA aminoacylation"/>
    <property type="evidence" value="ECO:0000318"/>
    <property type="project" value="GO_Central"/>
</dbReference>
<dbReference type="CDD" id="cd00671">
    <property type="entry name" value="ArgRS_core"/>
    <property type="match status" value="1"/>
</dbReference>
<dbReference type="FunFam" id="1.10.730.10:FF:000008">
    <property type="entry name" value="Arginine--tRNA ligase"/>
    <property type="match status" value="1"/>
</dbReference>
<dbReference type="FunFam" id="3.30.1360.70:FF:000008">
    <property type="entry name" value="Arginine--tRNA ligase"/>
    <property type="match status" value="1"/>
</dbReference>
<dbReference type="Gene3D" id="3.30.1360.70">
    <property type="entry name" value="Arginyl tRNA synthetase N-terminal domain"/>
    <property type="match status" value="1"/>
</dbReference>
<dbReference type="Gene3D" id="3.40.50.620">
    <property type="entry name" value="HUPs"/>
    <property type="match status" value="1"/>
</dbReference>
<dbReference type="Gene3D" id="1.10.730.10">
    <property type="entry name" value="Isoleucyl-tRNA Synthetase, Domain 1"/>
    <property type="match status" value="1"/>
</dbReference>
<dbReference type="HAMAP" id="MF_00123">
    <property type="entry name" value="Arg_tRNA_synth"/>
    <property type="match status" value="1"/>
</dbReference>
<dbReference type="InterPro" id="IPR001412">
    <property type="entry name" value="aa-tRNA-synth_I_CS"/>
</dbReference>
<dbReference type="InterPro" id="IPR001278">
    <property type="entry name" value="Arg-tRNA-ligase"/>
</dbReference>
<dbReference type="InterPro" id="IPR005148">
    <property type="entry name" value="Arg-tRNA-synth_N"/>
</dbReference>
<dbReference type="InterPro" id="IPR036695">
    <property type="entry name" value="Arg-tRNA-synth_N_sf"/>
</dbReference>
<dbReference type="InterPro" id="IPR035684">
    <property type="entry name" value="ArgRS_core"/>
</dbReference>
<dbReference type="InterPro" id="IPR008909">
    <property type="entry name" value="DALR_anticod-bd"/>
</dbReference>
<dbReference type="InterPro" id="IPR014729">
    <property type="entry name" value="Rossmann-like_a/b/a_fold"/>
</dbReference>
<dbReference type="InterPro" id="IPR009080">
    <property type="entry name" value="tRNAsynth_Ia_anticodon-bd"/>
</dbReference>
<dbReference type="NCBIfam" id="TIGR00456">
    <property type="entry name" value="argS"/>
    <property type="match status" value="1"/>
</dbReference>
<dbReference type="PANTHER" id="PTHR11956:SF5">
    <property type="entry name" value="ARGININE--TRNA LIGASE, CYTOPLASMIC"/>
    <property type="match status" value="1"/>
</dbReference>
<dbReference type="PANTHER" id="PTHR11956">
    <property type="entry name" value="ARGINYL-TRNA SYNTHETASE"/>
    <property type="match status" value="1"/>
</dbReference>
<dbReference type="Pfam" id="PF03485">
    <property type="entry name" value="Arg_tRNA_synt_N"/>
    <property type="match status" value="1"/>
</dbReference>
<dbReference type="Pfam" id="PF05746">
    <property type="entry name" value="DALR_1"/>
    <property type="match status" value="1"/>
</dbReference>
<dbReference type="Pfam" id="PF00750">
    <property type="entry name" value="tRNA-synt_1d"/>
    <property type="match status" value="1"/>
</dbReference>
<dbReference type="PRINTS" id="PR01038">
    <property type="entry name" value="TRNASYNTHARG"/>
</dbReference>
<dbReference type="SMART" id="SM01016">
    <property type="entry name" value="Arg_tRNA_synt_N"/>
    <property type="match status" value="1"/>
</dbReference>
<dbReference type="SMART" id="SM00836">
    <property type="entry name" value="DALR_1"/>
    <property type="match status" value="1"/>
</dbReference>
<dbReference type="SUPFAM" id="SSF47323">
    <property type="entry name" value="Anticodon-binding domain of a subclass of class I aminoacyl-tRNA synthetases"/>
    <property type="match status" value="1"/>
</dbReference>
<dbReference type="SUPFAM" id="SSF55190">
    <property type="entry name" value="Arginyl-tRNA synthetase (ArgRS), N-terminal 'additional' domain"/>
    <property type="match status" value="1"/>
</dbReference>
<dbReference type="SUPFAM" id="SSF52374">
    <property type="entry name" value="Nucleotidylyl transferase"/>
    <property type="match status" value="1"/>
</dbReference>
<dbReference type="PROSITE" id="PS00178">
    <property type="entry name" value="AA_TRNA_LIGASE_I"/>
    <property type="match status" value="1"/>
</dbReference>
<name>SYR_METJA</name>
<keyword id="KW-0030">Aminoacyl-tRNA synthetase</keyword>
<keyword id="KW-0067">ATP-binding</keyword>
<keyword id="KW-0963">Cytoplasm</keyword>
<keyword id="KW-0436">Ligase</keyword>
<keyword id="KW-0547">Nucleotide-binding</keyword>
<keyword id="KW-0648">Protein biosynthesis</keyword>
<keyword id="KW-1185">Reference proteome</keyword>
<feature type="chain" id="PRO_0000151646" description="Arginine--tRNA ligase">
    <location>
        <begin position="1"/>
        <end position="566"/>
    </location>
</feature>
<feature type="short sequence motif" description="'HIGH' region">
    <location>
        <begin position="124"/>
        <end position="134"/>
    </location>
</feature>
<sequence>MDIKSNIINALKEVISKEICKEIDIKLDKTPNLELGDYSVNICFRLAKELKKNPKIIAEELVDKLKAMNIEGVKEIKAVNGYINFYIDYNKFAKNLMEEIDKKGNNYGRGDKKSIKIILEHTSANPNGPLHIGHLRNAIIGDCLKRILEFYGYDVETHYYVNDMGRQMALVVYGIELFGLDKEKKKDHAIAETYVKINKYLEEHPEEEEKILELMRKYEDALENNEDNEITKKFEFAVNYALDGIKETLKNLNIKHDTFVWESSYVRNGMVKKVIEKLMETGKVIKEETYMLDLSDFGIEKKMVLARANGTSLYSTRDIAYHLDKLSKCDIGIDVLGADHKLTAEMVKAALKLLGSKVPEVIFYEFISLPEGSMSTRRGRFISTDELLEEAIKRAKEECNKRGVEENIAYDIGLGAVRYNIARISPEKPMVFRWEEALDFEKVGCPFIQYAHARCCSILKEAENKGVKDEAVFNYELTSEEKELIKMLDEFKDIIKESAESRRVHILANYLLELAKAFNRFYANCPILMTKVDDDVKKSRLKLVKSTKTVLETGLELLGINCPGRM</sequence>
<organism>
    <name type="scientific">Methanocaldococcus jannaschii (strain ATCC 43067 / DSM 2661 / JAL-1 / JCM 10045 / NBRC 100440)</name>
    <name type="common">Methanococcus jannaschii</name>
    <dbReference type="NCBI Taxonomy" id="243232"/>
    <lineage>
        <taxon>Archaea</taxon>
        <taxon>Methanobacteriati</taxon>
        <taxon>Methanobacteriota</taxon>
        <taxon>Methanomada group</taxon>
        <taxon>Methanococci</taxon>
        <taxon>Methanococcales</taxon>
        <taxon>Methanocaldococcaceae</taxon>
        <taxon>Methanocaldococcus</taxon>
    </lineage>
</organism>
<accession>Q57689</accession>
<gene>
    <name type="primary">argS</name>
    <name type="ordered locus">MJ0237</name>
</gene>